<comment type="function">
    <text evidence="1">Binds to 23S rRNA.</text>
</comment>
<comment type="subunit">
    <text evidence="1">Part of the 50S ribosomal subunit.</text>
</comment>
<comment type="subcellular location">
    <subcellularLocation>
        <location>Plastid</location>
        <location>Chloroplast</location>
    </subcellularLocation>
</comment>
<comment type="similarity">
    <text evidence="2">Belongs to the universal ribosomal protein uL23 family.</text>
</comment>
<name>RK23_BIGNA</name>
<protein>
    <recommendedName>
        <fullName evidence="2">Large ribosomal subunit protein uL23c</fullName>
    </recommendedName>
    <alternativeName>
        <fullName>50S ribosomal protein L23, chloroplastic</fullName>
    </alternativeName>
</protein>
<reference key="1">
    <citation type="journal article" date="2007" name="Mol. Biol. Evol.">
        <title>The complete chloroplast genome of the chlorarachniophyte Bigelowiella natans: evidence for independent origins of chlorarachniophyte and euglenid secondary endosymbionts.</title>
        <authorList>
            <person name="Rogers M.B."/>
            <person name="Gilson P.R."/>
            <person name="Su V."/>
            <person name="McFadden G.I."/>
            <person name="Keeling P.J."/>
        </authorList>
    </citation>
    <scope>NUCLEOTIDE SEQUENCE [LARGE SCALE GENOMIC DNA]</scope>
</reference>
<evidence type="ECO:0000250" key="1"/>
<evidence type="ECO:0000305" key="2"/>
<organism>
    <name type="scientific">Bigelowiella natans</name>
    <name type="common">Pedinomonas minutissima</name>
    <name type="synonym">Chlorarachnion sp. (strain CCMP621)</name>
    <dbReference type="NCBI Taxonomy" id="227086"/>
    <lineage>
        <taxon>Eukaryota</taxon>
        <taxon>Sar</taxon>
        <taxon>Rhizaria</taxon>
        <taxon>Cercozoa</taxon>
        <taxon>Chlorarachniophyceae</taxon>
        <taxon>Bigelowiella</taxon>
    </lineage>
</organism>
<keyword id="KW-0150">Chloroplast</keyword>
<keyword id="KW-0934">Plastid</keyword>
<keyword id="KW-0687">Ribonucleoprotein</keyword>
<keyword id="KW-0689">Ribosomal protein</keyword>
<keyword id="KW-0694">RNA-binding</keyword>
<keyword id="KW-0699">rRNA-binding</keyword>
<sequence length="87" mass="10296">MINLLQFQILTEKSINSLESNKYTFKVDKRLNKTQIKEIFEQLFNIKVLNVNTCRSPKSFSRASKRYKSFYKKVILTVESGKLIQFV</sequence>
<proteinExistence type="inferred from homology"/>
<gene>
    <name type="primary">rpl23</name>
</gene>
<geneLocation type="chloroplast"/>
<feature type="chain" id="PRO_0000272888" description="Large ribosomal subunit protein uL23c">
    <location>
        <begin position="1"/>
        <end position="87"/>
    </location>
</feature>
<dbReference type="EMBL" id="DQ851108">
    <property type="protein sequence ID" value="ABG91397.1"/>
    <property type="molecule type" value="Genomic_DNA"/>
</dbReference>
<dbReference type="RefSeq" id="YP_778565.1">
    <property type="nucleotide sequence ID" value="NC_008408.1"/>
</dbReference>
<dbReference type="SMR" id="Q06J62"/>
<dbReference type="GeneID" id="4352982"/>
<dbReference type="GO" id="GO:0009507">
    <property type="term" value="C:chloroplast"/>
    <property type="evidence" value="ECO:0007669"/>
    <property type="project" value="UniProtKB-SubCell"/>
</dbReference>
<dbReference type="GO" id="GO:1990904">
    <property type="term" value="C:ribonucleoprotein complex"/>
    <property type="evidence" value="ECO:0007669"/>
    <property type="project" value="UniProtKB-KW"/>
</dbReference>
<dbReference type="GO" id="GO:0005840">
    <property type="term" value="C:ribosome"/>
    <property type="evidence" value="ECO:0007669"/>
    <property type="project" value="UniProtKB-KW"/>
</dbReference>
<dbReference type="GO" id="GO:0019843">
    <property type="term" value="F:rRNA binding"/>
    <property type="evidence" value="ECO:0007669"/>
    <property type="project" value="UniProtKB-UniRule"/>
</dbReference>
<dbReference type="GO" id="GO:0003735">
    <property type="term" value="F:structural constituent of ribosome"/>
    <property type="evidence" value="ECO:0007669"/>
    <property type="project" value="InterPro"/>
</dbReference>
<dbReference type="GO" id="GO:0006412">
    <property type="term" value="P:translation"/>
    <property type="evidence" value="ECO:0007669"/>
    <property type="project" value="UniProtKB-UniRule"/>
</dbReference>
<dbReference type="Gene3D" id="3.30.70.330">
    <property type="match status" value="1"/>
</dbReference>
<dbReference type="HAMAP" id="MF_01369_B">
    <property type="entry name" value="Ribosomal_uL23_B"/>
    <property type="match status" value="1"/>
</dbReference>
<dbReference type="InterPro" id="IPR012677">
    <property type="entry name" value="Nucleotide-bd_a/b_plait_sf"/>
</dbReference>
<dbReference type="InterPro" id="IPR013025">
    <property type="entry name" value="Ribosomal_uL23-like"/>
</dbReference>
<dbReference type="InterPro" id="IPR012678">
    <property type="entry name" value="Ribosomal_uL23/eL15/eS24_sf"/>
</dbReference>
<dbReference type="PANTHER" id="PTHR11620">
    <property type="entry name" value="60S RIBOSOMAL PROTEIN L23A"/>
    <property type="match status" value="1"/>
</dbReference>
<dbReference type="Pfam" id="PF00276">
    <property type="entry name" value="Ribosomal_L23"/>
    <property type="match status" value="1"/>
</dbReference>
<dbReference type="SUPFAM" id="SSF54189">
    <property type="entry name" value="Ribosomal proteins S24e, L23 and L15e"/>
    <property type="match status" value="1"/>
</dbReference>
<accession>Q06J62</accession>